<dbReference type="EMBL" id="U80076">
    <property type="protein sequence ID" value="AAB58256.1"/>
    <property type="status" value="ALT_INIT"/>
    <property type="molecule type" value="mRNA"/>
</dbReference>
<dbReference type="RefSeq" id="NP_620607.1">
    <property type="nucleotide sequence ID" value="NM_139038.1"/>
</dbReference>
<dbReference type="SMR" id="P97680"/>
<dbReference type="FunCoup" id="P97680">
    <property type="interactions" value="394"/>
</dbReference>
<dbReference type="IntAct" id="P97680">
    <property type="interactions" value="1"/>
</dbReference>
<dbReference type="STRING" id="10116.ENSRNOP00000027335"/>
<dbReference type="iPTMnet" id="P97680"/>
<dbReference type="PhosphoSitePlus" id="P97680"/>
<dbReference type="PaxDb" id="10116-ENSRNOP00000027335"/>
<dbReference type="GeneID" id="207119"/>
<dbReference type="KEGG" id="rno:207119"/>
<dbReference type="UCSC" id="RGD:620006">
    <property type="organism name" value="rat"/>
</dbReference>
<dbReference type="AGR" id="RGD:620006"/>
<dbReference type="CTD" id="9610"/>
<dbReference type="RGD" id="620006">
    <property type="gene designation" value="Rin1"/>
</dbReference>
<dbReference type="eggNOG" id="KOG2320">
    <property type="taxonomic scope" value="Eukaryota"/>
</dbReference>
<dbReference type="InParanoid" id="P97680"/>
<dbReference type="PhylomeDB" id="P97680"/>
<dbReference type="Reactome" id="R-RNO-8876198">
    <property type="pathway name" value="RAB GEFs exchange GTP for GDP on RABs"/>
</dbReference>
<dbReference type="PRO" id="PR:P97680"/>
<dbReference type="Proteomes" id="UP000002494">
    <property type="component" value="Unplaced"/>
</dbReference>
<dbReference type="GO" id="GO:0005737">
    <property type="term" value="C:cytoplasm"/>
    <property type="evidence" value="ECO:0000266"/>
    <property type="project" value="RGD"/>
</dbReference>
<dbReference type="GO" id="GO:0005856">
    <property type="term" value="C:cytoskeleton"/>
    <property type="evidence" value="ECO:0007669"/>
    <property type="project" value="UniProtKB-SubCell"/>
</dbReference>
<dbReference type="GO" id="GO:0005829">
    <property type="term" value="C:cytosol"/>
    <property type="evidence" value="ECO:0000318"/>
    <property type="project" value="GO_Central"/>
</dbReference>
<dbReference type="GO" id="GO:0030425">
    <property type="term" value="C:dendrite"/>
    <property type="evidence" value="ECO:0000266"/>
    <property type="project" value="RGD"/>
</dbReference>
<dbReference type="GO" id="GO:0030139">
    <property type="term" value="C:endocytic vesicle"/>
    <property type="evidence" value="ECO:0000318"/>
    <property type="project" value="GO_Central"/>
</dbReference>
<dbReference type="GO" id="GO:0043025">
    <property type="term" value="C:neuronal cell body"/>
    <property type="evidence" value="ECO:0000266"/>
    <property type="project" value="RGD"/>
</dbReference>
<dbReference type="GO" id="GO:0005886">
    <property type="term" value="C:plasma membrane"/>
    <property type="evidence" value="ECO:0000266"/>
    <property type="project" value="RGD"/>
</dbReference>
<dbReference type="GO" id="GO:0005096">
    <property type="term" value="F:GTPase activator activity"/>
    <property type="evidence" value="ECO:0007669"/>
    <property type="project" value="UniProtKB-KW"/>
</dbReference>
<dbReference type="GO" id="GO:0005085">
    <property type="term" value="F:guanyl-nucleotide exchange factor activity"/>
    <property type="evidence" value="ECO:0000318"/>
    <property type="project" value="GO_Central"/>
</dbReference>
<dbReference type="GO" id="GO:0031267">
    <property type="term" value="F:small GTPase binding"/>
    <property type="evidence" value="ECO:0000266"/>
    <property type="project" value="RGD"/>
</dbReference>
<dbReference type="GO" id="GO:0008306">
    <property type="term" value="P:associative learning"/>
    <property type="evidence" value="ECO:0000266"/>
    <property type="project" value="RGD"/>
</dbReference>
<dbReference type="GO" id="GO:0006897">
    <property type="term" value="P:endocytosis"/>
    <property type="evidence" value="ECO:0007669"/>
    <property type="project" value="UniProtKB-KW"/>
</dbReference>
<dbReference type="GO" id="GO:0007613">
    <property type="term" value="P:memory"/>
    <property type="evidence" value="ECO:0000266"/>
    <property type="project" value="RGD"/>
</dbReference>
<dbReference type="GO" id="GO:0031914">
    <property type="term" value="P:negative regulation of synaptic plasticity"/>
    <property type="evidence" value="ECO:0000266"/>
    <property type="project" value="RGD"/>
</dbReference>
<dbReference type="GO" id="GO:0007165">
    <property type="term" value="P:signal transduction"/>
    <property type="evidence" value="ECO:0007669"/>
    <property type="project" value="InterPro"/>
</dbReference>
<dbReference type="CDD" id="cd10393">
    <property type="entry name" value="SH2_RIN1"/>
    <property type="match status" value="1"/>
</dbReference>
<dbReference type="FunFam" id="3.30.505.10:FF:000068">
    <property type="entry name" value="ras and Rab interactor 1"/>
    <property type="match status" value="1"/>
</dbReference>
<dbReference type="FunFam" id="1.20.1050.80:FF:000002">
    <property type="entry name" value="Ras and Rab interactor 2"/>
    <property type="match status" value="1"/>
</dbReference>
<dbReference type="Gene3D" id="3.30.505.10">
    <property type="entry name" value="SH2 domain"/>
    <property type="match status" value="1"/>
</dbReference>
<dbReference type="Gene3D" id="1.20.1050.80">
    <property type="entry name" value="VPS9 domain"/>
    <property type="match status" value="1"/>
</dbReference>
<dbReference type="InterPro" id="IPR000159">
    <property type="entry name" value="RA_dom"/>
</dbReference>
<dbReference type="InterPro" id="IPR035867">
    <property type="entry name" value="RIN1_SH2"/>
</dbReference>
<dbReference type="InterPro" id="IPR000980">
    <property type="entry name" value="SH2"/>
</dbReference>
<dbReference type="InterPro" id="IPR036860">
    <property type="entry name" value="SH2_dom_sf"/>
</dbReference>
<dbReference type="InterPro" id="IPR003123">
    <property type="entry name" value="VPS9"/>
</dbReference>
<dbReference type="InterPro" id="IPR045046">
    <property type="entry name" value="Vps9-like"/>
</dbReference>
<dbReference type="InterPro" id="IPR037191">
    <property type="entry name" value="VPS9_dom_sf"/>
</dbReference>
<dbReference type="PANTHER" id="PTHR23101">
    <property type="entry name" value="RAB GDP/GTP EXCHANGE FACTOR"/>
    <property type="match status" value="1"/>
</dbReference>
<dbReference type="PANTHER" id="PTHR23101:SF62">
    <property type="entry name" value="RAS AND RAB INTERACTOR 1"/>
    <property type="match status" value="1"/>
</dbReference>
<dbReference type="Pfam" id="PF23268">
    <property type="entry name" value="RIN1"/>
    <property type="match status" value="1"/>
</dbReference>
<dbReference type="Pfam" id="PF02204">
    <property type="entry name" value="VPS9"/>
    <property type="match status" value="1"/>
</dbReference>
<dbReference type="SMART" id="SM00314">
    <property type="entry name" value="RA"/>
    <property type="match status" value="1"/>
</dbReference>
<dbReference type="SMART" id="SM00252">
    <property type="entry name" value="SH2"/>
    <property type="match status" value="1"/>
</dbReference>
<dbReference type="SMART" id="SM00167">
    <property type="entry name" value="VPS9"/>
    <property type="match status" value="1"/>
</dbReference>
<dbReference type="SUPFAM" id="SSF55550">
    <property type="entry name" value="SH2 domain"/>
    <property type="match status" value="1"/>
</dbReference>
<dbReference type="SUPFAM" id="SSF109993">
    <property type="entry name" value="VPS9 domain"/>
    <property type="match status" value="1"/>
</dbReference>
<dbReference type="PROSITE" id="PS50200">
    <property type="entry name" value="RA"/>
    <property type="match status" value="1"/>
</dbReference>
<dbReference type="PROSITE" id="PS50001">
    <property type="entry name" value="SH2"/>
    <property type="match status" value="1"/>
</dbReference>
<dbReference type="PROSITE" id="PS51205">
    <property type="entry name" value="VPS9"/>
    <property type="match status" value="1"/>
</dbReference>
<keyword id="KW-0007">Acetylation</keyword>
<keyword id="KW-0963">Cytoplasm</keyword>
<keyword id="KW-0206">Cytoskeleton</keyword>
<keyword id="KW-0254">Endocytosis</keyword>
<keyword id="KW-0343">GTPase activation</keyword>
<keyword id="KW-0472">Membrane</keyword>
<keyword id="KW-0488">Methylation</keyword>
<keyword id="KW-0597">Phosphoprotein</keyword>
<keyword id="KW-1185">Reference proteome</keyword>
<keyword id="KW-0727">SH2 domain</keyword>
<accession>P97680</accession>
<evidence type="ECO:0000250" key="1"/>
<evidence type="ECO:0000250" key="2">
    <source>
        <dbReference type="UniProtKB" id="Q13671"/>
    </source>
</evidence>
<evidence type="ECO:0000255" key="3">
    <source>
        <dbReference type="PROSITE-ProRule" id="PRU00166"/>
    </source>
</evidence>
<evidence type="ECO:0000255" key="4">
    <source>
        <dbReference type="PROSITE-ProRule" id="PRU00191"/>
    </source>
</evidence>
<evidence type="ECO:0000255" key="5">
    <source>
        <dbReference type="PROSITE-ProRule" id="PRU00550"/>
    </source>
</evidence>
<evidence type="ECO:0000256" key="6">
    <source>
        <dbReference type="SAM" id="MobiDB-lite"/>
    </source>
</evidence>
<evidence type="ECO:0000305" key="7"/>
<name>RIN1_RAT</name>
<reference key="1">
    <citation type="journal article" date="1997" name="Proc. Natl. Acad. Sci. U.S.A.">
        <title>Protein binding and signaling properties of RIN1 suggest a unique effector function.</title>
        <authorList>
            <person name="Han L."/>
            <person name="Wong D."/>
            <person name="Dhaka A."/>
            <person name="Afar D.E.H."/>
            <person name="White M."/>
            <person name="Xie W."/>
            <person name="Herschman H."/>
            <person name="Witte O."/>
            <person name="Colicelli J."/>
        </authorList>
    </citation>
    <scope>NUCLEOTIDE SEQUENCE [MRNA]</scope>
    <source>
        <strain>Sprague-Dawley</strain>
        <tissue>Brain</tissue>
    </source>
</reference>
<feature type="chain" id="PRO_0000191319" description="Ras and Rab interactor 1">
    <location>
        <begin position="1"/>
        <end position="774"/>
    </location>
</feature>
<feature type="domain" description="SH2" evidence="4">
    <location>
        <begin position="68"/>
        <end position="162"/>
    </location>
</feature>
<feature type="domain" description="VPS9" evidence="5">
    <location>
        <begin position="456"/>
        <end position="598"/>
    </location>
</feature>
<feature type="domain" description="Ras-associating" evidence="3">
    <location>
        <begin position="624"/>
        <end position="706"/>
    </location>
</feature>
<feature type="region of interest" description="Disordered" evidence="6">
    <location>
        <begin position="1"/>
        <end position="52"/>
    </location>
</feature>
<feature type="region of interest" description="Disordered" evidence="6">
    <location>
        <begin position="188"/>
        <end position="211"/>
    </location>
</feature>
<feature type="region of interest" description="Disordered" evidence="6">
    <location>
        <begin position="249"/>
        <end position="342"/>
    </location>
</feature>
<feature type="region of interest" description="Disordered" evidence="6">
    <location>
        <begin position="704"/>
        <end position="774"/>
    </location>
</feature>
<feature type="compositionally biased region" description="Pro residues" evidence="6">
    <location>
        <begin position="256"/>
        <end position="268"/>
    </location>
</feature>
<feature type="compositionally biased region" description="Low complexity" evidence="6">
    <location>
        <begin position="327"/>
        <end position="337"/>
    </location>
</feature>
<feature type="compositionally biased region" description="Basic and acidic residues" evidence="6">
    <location>
        <begin position="704"/>
        <end position="766"/>
    </location>
</feature>
<feature type="modified residue" description="N-acetylmethionine" evidence="2">
    <location>
        <position position="1"/>
    </location>
</feature>
<feature type="modified residue" description="Phosphoserine" evidence="2">
    <location>
        <position position="16"/>
    </location>
</feature>
<feature type="modified residue" description="Phosphotyrosine; by ABL1 and ABL2" evidence="2">
    <location>
        <position position="35"/>
    </location>
</feature>
<feature type="modified residue" description="Phosphoserine" evidence="2">
    <location>
        <position position="209"/>
    </location>
</feature>
<feature type="modified residue" description="Phosphoserine" evidence="2">
    <location>
        <position position="257"/>
    </location>
</feature>
<feature type="modified residue" description="Phosphoserine" evidence="2">
    <location>
        <position position="330"/>
    </location>
</feature>
<feature type="modified residue" description="Phosphoserine" evidence="2">
    <location>
        <position position="334"/>
    </location>
</feature>
<feature type="modified residue" description="Phosphoserine; by PKD/PRKD1" evidence="2">
    <location>
        <position position="351"/>
    </location>
</feature>
<feature type="modified residue" description="Phosphoserine" evidence="2">
    <location>
        <position position="609"/>
    </location>
</feature>
<feature type="modified residue" description="Omega-N-methylarginine" evidence="2">
    <location>
        <position position="692"/>
    </location>
</feature>
<sequence>MEDPGETEAHPLGATSLNFVPGYQQEEKPSPDPLYDTPDARGVQAGGSQQPARTVSLRERLLITRPVWLQLRANAAAALHVLRTEPPGTFLVRKSNTRQCQTLCVRLPEASGPSFVSSHYLQESPGGISLEGSELTFPDLVQLICAYCHTRDILLLPLPLPRAIHQAATHKELEAISHLGMEFWSSSLNTKNQQRPSEAPQIPRLKARSPQELDQGTGAALCFFNPLFPGDLGPTKREKFKRSFKVRVSTETSSPLSPPAVPPPPVPVLPGTSSSQTERLPPRQLLQRESSVGYRVPGSASGPSLPPLPSLQEVDCCSPSSSEEEGSSGSPTTSPRLSRPRHRRPLLRSMSSAFCSLLAPERQVGRAATMLMQNRYTAVGQLVQDLLTQVRVGPESRELQGIRQALSRARAMLSAELGPEKLLPPERLELVLEKSLHRSVLKPLRPILAARLRRRLSTDGSLGRLAEGFRLARTQGPGAFGSHLNLSSPVEIEPVRQKLLQLLRAYSPSAQIKWLLQACKLLYTALKTQAGENAGADEFLPLLSLVLAQCDLPDLLLEAEYMSELLEPTLLTGEGGYYLTSLSASLALLSGLSQAHALPLSPAQELQRSLALWEQRRLPATHNFQHLLRVAYQDPSTGCTSKTLAVPPGSSIATLSQLCATKFRVTQPDAFGLFLYKDQGYHRLPPEALVHRLPTTGYLIYRRAERPETQRAATEKTKTGNERPERGAWEEEKGGLNGEGKSEIAVDQEGKDQARGGHMQLEEQKAEGCPALEE</sequence>
<proteinExistence type="evidence at transcript level"/>
<organism>
    <name type="scientific">Rattus norvegicus</name>
    <name type="common">Rat</name>
    <dbReference type="NCBI Taxonomy" id="10116"/>
    <lineage>
        <taxon>Eukaryota</taxon>
        <taxon>Metazoa</taxon>
        <taxon>Chordata</taxon>
        <taxon>Craniata</taxon>
        <taxon>Vertebrata</taxon>
        <taxon>Euteleostomi</taxon>
        <taxon>Mammalia</taxon>
        <taxon>Eutheria</taxon>
        <taxon>Euarchontoglires</taxon>
        <taxon>Glires</taxon>
        <taxon>Rodentia</taxon>
        <taxon>Myomorpha</taxon>
        <taxon>Muroidea</taxon>
        <taxon>Muridae</taxon>
        <taxon>Murinae</taxon>
        <taxon>Rattus</taxon>
    </lineage>
</organism>
<gene>
    <name type="primary">Rin1</name>
</gene>
<protein>
    <recommendedName>
        <fullName>Ras and Rab interactor 1</fullName>
    </recommendedName>
    <alternativeName>
        <fullName>Ras interaction/interference protein 1</fullName>
    </alternativeName>
</protein>
<comment type="function">
    <text evidence="1">Ras effector protein, which may serve as an inhibitory modulator of neuronal plasticity in aversive memory formation. Can affect Ras signaling at different levels. First, by competing with RAF1 protein for binding to activated Ras. Second, by enhancing signaling from ABL1 and ABL2, which regulate cytoskeletal remodeling. Third, by activating RAB5A, possibly by functioning as a guanine nucleotide exchange factor (GEF) for RAB5A, by exchanging bound GDP for free GTP, and facilitating Ras-activated receptor endocytosis (By similarity).</text>
</comment>
<comment type="subunit">
    <text evidence="1">Interacts with the GTP-bound form of Ras proteins (NRAS, HRAS and KRAS). This interaction prevents the association between RAF1 and Ras. Interacts with 14-3-3 proteins YWHAB, YWHAE and YWHAZ when phosphorylated on Ser-351. Interacts with the SH3 domain of ABL1 and ABL2. Interacts with RAB5A. The interaction with Ras is probably regulated and antagonized by the interaction with 14-3-3 proteins. The interaction with 14-3-3 proteins is regulated by phosphorylation on Ser-351 (By similarity).</text>
</comment>
<comment type="subcellular location">
    <subcellularLocation>
        <location evidence="1">Cytoplasm</location>
    </subcellularLocation>
    <subcellularLocation>
        <location evidence="1">Membrane</location>
    </subcellularLocation>
    <subcellularLocation>
        <location evidence="1">Cytoplasm</location>
        <location evidence="1">Cytoskeleton</location>
    </subcellularLocation>
    <text evidence="1">Some amount is membrane-associated.</text>
</comment>
<comment type="PTM">
    <text evidence="1">Phosphorylated on tyrosine residues by ABL1 and ABL2. Phosphorylation at Ser-351 by PRKD1 induces interaction with 14-3-3 proteins (By similarity).</text>
</comment>
<comment type="similarity">
    <text evidence="7">Belongs to the RIN (Ras interaction/interference) family.</text>
</comment>
<comment type="sequence caution" evidence="7">
    <conflict type="erroneous initiation">
        <sequence resource="EMBL-CDS" id="AAB58256"/>
    </conflict>
</comment>